<reference key="1">
    <citation type="journal article" date="2005" name="Genome Res.">
        <title>Living with two extremes: conclusions from the genome sequence of Natronomonas pharaonis.</title>
        <authorList>
            <person name="Falb M."/>
            <person name="Pfeiffer F."/>
            <person name="Palm P."/>
            <person name="Rodewald K."/>
            <person name="Hickmann V."/>
            <person name="Tittor J."/>
            <person name="Oesterhelt D."/>
        </authorList>
    </citation>
    <scope>NUCLEOTIDE SEQUENCE [LARGE SCALE GENOMIC DNA]</scope>
    <source>
        <strain>ATCC 35678 / DSM 2160 / CIP 103997 / JCM 8858 / NBRC 14720 / NCIMB 2260 / Gabara</strain>
    </source>
</reference>
<comment type="function">
    <text evidence="1">Required for maturation of urease via the functional incorporation of the urease nickel metallocenter.</text>
</comment>
<comment type="subunit">
    <text evidence="1">UreD, UreF and UreG form a complex that acts as a GTP-hydrolysis-dependent molecular chaperone, activating the urease apoprotein by helping to assemble the nickel containing metallocenter of UreC. The UreE protein probably delivers the nickel.</text>
</comment>
<comment type="subcellular location">
    <subcellularLocation>
        <location evidence="1">Cytoplasm</location>
    </subcellularLocation>
</comment>
<comment type="similarity">
    <text evidence="1">Belongs to the UreD family.</text>
</comment>
<organism>
    <name type="scientific">Natronomonas pharaonis (strain ATCC 35678 / DSM 2160 / CIP 103997 / JCM 8858 / NBRC 14720 / NCIMB 2260 / Gabara)</name>
    <name type="common">Halobacterium pharaonis</name>
    <dbReference type="NCBI Taxonomy" id="348780"/>
    <lineage>
        <taxon>Archaea</taxon>
        <taxon>Methanobacteriati</taxon>
        <taxon>Methanobacteriota</taxon>
        <taxon>Stenosarchaea group</taxon>
        <taxon>Halobacteria</taxon>
        <taxon>Halobacteriales</taxon>
        <taxon>Haloarculaceae</taxon>
        <taxon>Natronomonas</taxon>
    </lineage>
</organism>
<sequence>MSAVPDAFQRYGAESLAQAPAFGPGKDGVFEATLARTGDRDTRLLRDYTKVPYHLTGTLDTDPAPGLTTLCLQEPTGGVAQGDRHSITVTAREGARARVTTQSATKVHSMQANYAHLDATLEAGPDAHLEYVPGPTIVNEDARCLQTVAVDLAPSATVVVADVFVPGGLSAHEPFDFDHYHSRLEARCEERLVCADAVDLHPADGDPRDPATVADYDVVGTLYVLAPEADTEVLAEAIHARFDAHDAVTAGVSALPYESGVSVRVLGTRSADVTDAVRDAWDASRQELLGVGIPADRRY</sequence>
<protein>
    <recommendedName>
        <fullName evidence="1">Urease accessory protein UreD</fullName>
    </recommendedName>
</protein>
<proteinExistence type="inferred from homology"/>
<dbReference type="EMBL" id="CR936257">
    <property type="protein sequence ID" value="CAI49099.1"/>
    <property type="molecule type" value="Genomic_DNA"/>
</dbReference>
<dbReference type="RefSeq" id="WP_011322728.1">
    <property type="nucleotide sequence ID" value="NC_007426.1"/>
</dbReference>
<dbReference type="SMR" id="Q3IRZ2"/>
<dbReference type="STRING" id="348780.NP_2016A"/>
<dbReference type="EnsemblBacteria" id="CAI49099">
    <property type="protein sequence ID" value="CAI49099"/>
    <property type="gene ID" value="NP_2016A"/>
</dbReference>
<dbReference type="GeneID" id="3703451"/>
<dbReference type="KEGG" id="nph:NP_2016A"/>
<dbReference type="eggNOG" id="arCOG04529">
    <property type="taxonomic scope" value="Archaea"/>
</dbReference>
<dbReference type="HOGENOM" id="CLU_056339_1_0_2"/>
<dbReference type="OrthoDB" id="10701at2157"/>
<dbReference type="Proteomes" id="UP000002698">
    <property type="component" value="Chromosome"/>
</dbReference>
<dbReference type="GO" id="GO:0005737">
    <property type="term" value="C:cytoplasm"/>
    <property type="evidence" value="ECO:0007669"/>
    <property type="project" value="UniProtKB-SubCell"/>
</dbReference>
<dbReference type="GO" id="GO:0016151">
    <property type="term" value="F:nickel cation binding"/>
    <property type="evidence" value="ECO:0007669"/>
    <property type="project" value="UniProtKB-UniRule"/>
</dbReference>
<dbReference type="HAMAP" id="MF_01384">
    <property type="entry name" value="UreD"/>
    <property type="match status" value="1"/>
</dbReference>
<dbReference type="InterPro" id="IPR002669">
    <property type="entry name" value="UreD"/>
</dbReference>
<dbReference type="PANTHER" id="PTHR33643">
    <property type="entry name" value="UREASE ACCESSORY PROTEIN D"/>
    <property type="match status" value="1"/>
</dbReference>
<dbReference type="PANTHER" id="PTHR33643:SF1">
    <property type="entry name" value="UREASE ACCESSORY PROTEIN D"/>
    <property type="match status" value="1"/>
</dbReference>
<dbReference type="Pfam" id="PF01774">
    <property type="entry name" value="UreD"/>
    <property type="match status" value="1"/>
</dbReference>
<feature type="chain" id="PRO_0000346615" description="Urease accessory protein UreD">
    <location>
        <begin position="1"/>
        <end position="299"/>
    </location>
</feature>
<gene>
    <name evidence="1" type="primary">ureD</name>
    <name type="ordered locus">NP_2016A</name>
</gene>
<accession>Q3IRZ2</accession>
<evidence type="ECO:0000255" key="1">
    <source>
        <dbReference type="HAMAP-Rule" id="MF_01384"/>
    </source>
</evidence>
<keyword id="KW-0143">Chaperone</keyword>
<keyword id="KW-0963">Cytoplasm</keyword>
<keyword id="KW-0996">Nickel insertion</keyword>
<keyword id="KW-1185">Reference proteome</keyword>
<name>URED_NATPD</name>